<accession>Q8CWS7</accession>
<evidence type="ECO:0000255" key="1">
    <source>
        <dbReference type="HAMAP-Rule" id="MF_00185"/>
    </source>
</evidence>
<evidence type="ECO:0000305" key="2"/>
<comment type="function">
    <text evidence="1">Catalyzes the transfer of a dimethylallyl group onto the adenine at position 37 in tRNAs that read codons beginning with uridine, leading to the formation of N6-(dimethylallyl)adenosine (i(6)A).</text>
</comment>
<comment type="catalytic activity">
    <reaction evidence="1">
        <text>adenosine(37) in tRNA + dimethylallyl diphosphate = N(6)-dimethylallyladenosine(37) in tRNA + diphosphate</text>
        <dbReference type="Rhea" id="RHEA:26482"/>
        <dbReference type="Rhea" id="RHEA-COMP:10162"/>
        <dbReference type="Rhea" id="RHEA-COMP:10375"/>
        <dbReference type="ChEBI" id="CHEBI:33019"/>
        <dbReference type="ChEBI" id="CHEBI:57623"/>
        <dbReference type="ChEBI" id="CHEBI:74411"/>
        <dbReference type="ChEBI" id="CHEBI:74415"/>
        <dbReference type="EC" id="2.5.1.75"/>
    </reaction>
</comment>
<comment type="cofactor">
    <cofactor evidence="1">
        <name>Mg(2+)</name>
        <dbReference type="ChEBI" id="CHEBI:18420"/>
    </cofactor>
</comment>
<comment type="subunit">
    <text evidence="1">Monomer.</text>
</comment>
<comment type="similarity">
    <text evidence="1">Belongs to the IPP transferase family.</text>
</comment>
<comment type="sequence caution" evidence="2">
    <conflict type="erroneous initiation">
        <sequence resource="EMBL-CDS" id="AAK99392"/>
    </conflict>
</comment>
<sequence length="294" mass="33449">MKTKIIVIVGPTAVGKTALAIEVAKRFNGEVVSGDSQQVYRGLDIGTAKASPEEQAAVPHHLIDVREITESYSAFDFVSEAKMTIEDIHSRGKLAIIAGGTGLYIQSLLEGYHLGGETPHEEILAYRASLEPYSDEELAHLVEQAGLEIPQFNRRRAMRALEIAHFGQDLENQEILYEPLIICLDDERSQLYERINHRVDLMFEAGLLDEAKWLFDHSPNVQAAKGIGYKELFPYFRGEQTFEEARESLKQATRRFAKRQLTWFRNRMQVTFYQIGESGVQDRILSQIEEFLDD</sequence>
<reference key="1">
    <citation type="journal article" date="2001" name="J. Bacteriol.">
        <title>Genome of the bacterium Streptococcus pneumoniae strain R6.</title>
        <authorList>
            <person name="Hoskins J."/>
            <person name="Alborn W.E. Jr."/>
            <person name="Arnold J."/>
            <person name="Blaszczak L.C."/>
            <person name="Burgett S."/>
            <person name="DeHoff B.S."/>
            <person name="Estrem S.T."/>
            <person name="Fritz L."/>
            <person name="Fu D.-J."/>
            <person name="Fuller W."/>
            <person name="Geringer C."/>
            <person name="Gilmour R."/>
            <person name="Glass J.S."/>
            <person name="Khoja H."/>
            <person name="Kraft A.R."/>
            <person name="Lagace R.E."/>
            <person name="LeBlanc D.J."/>
            <person name="Lee L.N."/>
            <person name="Lefkowitz E.J."/>
            <person name="Lu J."/>
            <person name="Matsushima P."/>
            <person name="McAhren S.M."/>
            <person name="McHenney M."/>
            <person name="McLeaster K."/>
            <person name="Mundy C.W."/>
            <person name="Nicas T.I."/>
            <person name="Norris F.H."/>
            <person name="O'Gara M."/>
            <person name="Peery R.B."/>
            <person name="Robertson G.T."/>
            <person name="Rockey P."/>
            <person name="Sun P.-M."/>
            <person name="Winkler M.E."/>
            <person name="Yang Y."/>
            <person name="Young-Bellido M."/>
            <person name="Zhao G."/>
            <person name="Zook C.A."/>
            <person name="Baltz R.H."/>
            <person name="Jaskunas S.R."/>
            <person name="Rosteck P.R. Jr."/>
            <person name="Skatrud P.L."/>
            <person name="Glass J.I."/>
        </authorList>
    </citation>
    <scope>NUCLEOTIDE SEQUENCE [LARGE SCALE GENOMIC DNA]</scope>
    <source>
        <strain>ATCC BAA-255 / R6</strain>
    </source>
</reference>
<feature type="chain" id="PRO_0000163986" description="tRNA dimethylallyltransferase">
    <location>
        <begin position="1"/>
        <end position="294"/>
    </location>
</feature>
<feature type="region of interest" description="Interaction with substrate tRNA" evidence="1">
    <location>
        <begin position="35"/>
        <end position="38"/>
    </location>
</feature>
<feature type="binding site" evidence="1">
    <location>
        <begin position="10"/>
        <end position="17"/>
    </location>
    <ligand>
        <name>ATP</name>
        <dbReference type="ChEBI" id="CHEBI:30616"/>
    </ligand>
</feature>
<feature type="binding site" evidence="1">
    <location>
        <begin position="12"/>
        <end position="17"/>
    </location>
    <ligand>
        <name>substrate</name>
    </ligand>
</feature>
<feature type="site" description="Interaction with substrate tRNA" evidence="1">
    <location>
        <position position="101"/>
    </location>
</feature>
<feature type="site" description="Interaction with substrate tRNA" evidence="1">
    <location>
        <position position="127"/>
    </location>
</feature>
<gene>
    <name evidence="1" type="primary">miaA</name>
    <name type="ordered locus">spr0588</name>
</gene>
<organism>
    <name type="scientific">Streptococcus pneumoniae (strain ATCC BAA-255 / R6)</name>
    <dbReference type="NCBI Taxonomy" id="171101"/>
    <lineage>
        <taxon>Bacteria</taxon>
        <taxon>Bacillati</taxon>
        <taxon>Bacillota</taxon>
        <taxon>Bacilli</taxon>
        <taxon>Lactobacillales</taxon>
        <taxon>Streptococcaceae</taxon>
        <taxon>Streptococcus</taxon>
    </lineage>
</organism>
<dbReference type="EC" id="2.5.1.75" evidence="1"/>
<dbReference type="EMBL" id="AE007317">
    <property type="protein sequence ID" value="AAK99392.1"/>
    <property type="status" value="ALT_INIT"/>
    <property type="molecule type" value="Genomic_DNA"/>
</dbReference>
<dbReference type="PIR" id="D97945">
    <property type="entry name" value="D97945"/>
</dbReference>
<dbReference type="RefSeq" id="NP_358182.1">
    <property type="nucleotide sequence ID" value="NC_003098.1"/>
</dbReference>
<dbReference type="RefSeq" id="WP_000850184.1">
    <property type="nucleotide sequence ID" value="NC_003098.1"/>
</dbReference>
<dbReference type="SMR" id="Q8CWS7"/>
<dbReference type="STRING" id="171101.spr0588"/>
<dbReference type="KEGG" id="spr:spr0588"/>
<dbReference type="PATRIC" id="fig|171101.6.peg.655"/>
<dbReference type="eggNOG" id="COG0324">
    <property type="taxonomic scope" value="Bacteria"/>
</dbReference>
<dbReference type="HOGENOM" id="CLU_032616_0_1_9"/>
<dbReference type="Proteomes" id="UP000000586">
    <property type="component" value="Chromosome"/>
</dbReference>
<dbReference type="GO" id="GO:0005524">
    <property type="term" value="F:ATP binding"/>
    <property type="evidence" value="ECO:0007669"/>
    <property type="project" value="UniProtKB-UniRule"/>
</dbReference>
<dbReference type="GO" id="GO:0052381">
    <property type="term" value="F:tRNA dimethylallyltransferase activity"/>
    <property type="evidence" value="ECO:0000318"/>
    <property type="project" value="GO_Central"/>
</dbReference>
<dbReference type="GO" id="GO:0006400">
    <property type="term" value="P:tRNA modification"/>
    <property type="evidence" value="ECO:0000318"/>
    <property type="project" value="GO_Central"/>
</dbReference>
<dbReference type="Gene3D" id="3.40.50.300">
    <property type="entry name" value="P-loop containing nucleotide triphosphate hydrolases"/>
    <property type="match status" value="1"/>
</dbReference>
<dbReference type="HAMAP" id="MF_00185">
    <property type="entry name" value="IPP_trans"/>
    <property type="match status" value="1"/>
</dbReference>
<dbReference type="InterPro" id="IPR039657">
    <property type="entry name" value="Dimethylallyltransferase"/>
</dbReference>
<dbReference type="InterPro" id="IPR018022">
    <property type="entry name" value="IPT"/>
</dbReference>
<dbReference type="InterPro" id="IPR027417">
    <property type="entry name" value="P-loop_NTPase"/>
</dbReference>
<dbReference type="NCBIfam" id="TIGR00174">
    <property type="entry name" value="miaA"/>
    <property type="match status" value="1"/>
</dbReference>
<dbReference type="PANTHER" id="PTHR11088">
    <property type="entry name" value="TRNA DIMETHYLALLYLTRANSFERASE"/>
    <property type="match status" value="1"/>
</dbReference>
<dbReference type="PANTHER" id="PTHR11088:SF60">
    <property type="entry name" value="TRNA DIMETHYLALLYLTRANSFERASE"/>
    <property type="match status" value="1"/>
</dbReference>
<dbReference type="Pfam" id="PF01715">
    <property type="entry name" value="IPPT"/>
    <property type="match status" value="1"/>
</dbReference>
<dbReference type="SUPFAM" id="SSF52540">
    <property type="entry name" value="P-loop containing nucleoside triphosphate hydrolases"/>
    <property type="match status" value="2"/>
</dbReference>
<keyword id="KW-0067">ATP-binding</keyword>
<keyword id="KW-0460">Magnesium</keyword>
<keyword id="KW-0547">Nucleotide-binding</keyword>
<keyword id="KW-1185">Reference proteome</keyword>
<keyword id="KW-0808">Transferase</keyword>
<keyword id="KW-0819">tRNA processing</keyword>
<protein>
    <recommendedName>
        <fullName evidence="1">tRNA dimethylallyltransferase</fullName>
        <ecNumber evidence="1">2.5.1.75</ecNumber>
    </recommendedName>
    <alternativeName>
        <fullName evidence="1">Dimethylallyl diphosphate:tRNA dimethylallyltransferase</fullName>
        <shortName evidence="1">DMAPP:tRNA dimethylallyltransferase</shortName>
        <shortName evidence="1">DMATase</shortName>
    </alternativeName>
    <alternativeName>
        <fullName evidence="1">Isopentenyl-diphosphate:tRNA isopentenyltransferase</fullName>
        <shortName evidence="1">IPP transferase</shortName>
        <shortName evidence="1">IPPT</shortName>
        <shortName evidence="1">IPTase</shortName>
    </alternativeName>
</protein>
<name>MIAA_STRR6</name>
<proteinExistence type="inferred from homology"/>